<feature type="chain" id="PRO_1000212294" description="Exosome complex component Rrp42">
    <location>
        <begin position="1"/>
        <end position="275"/>
    </location>
</feature>
<organism>
    <name type="scientific">Saccharolobus islandicus (strain Y.G.57.14 / Yellowstone #1)</name>
    <name type="common">Sulfolobus islandicus</name>
    <dbReference type="NCBI Taxonomy" id="439386"/>
    <lineage>
        <taxon>Archaea</taxon>
        <taxon>Thermoproteota</taxon>
        <taxon>Thermoprotei</taxon>
        <taxon>Sulfolobales</taxon>
        <taxon>Sulfolobaceae</taxon>
        <taxon>Saccharolobus</taxon>
    </lineage>
</organism>
<keyword id="KW-0963">Cytoplasm</keyword>
<keyword id="KW-0271">Exosome</keyword>
<evidence type="ECO:0000255" key="1">
    <source>
        <dbReference type="HAMAP-Rule" id="MF_00622"/>
    </source>
</evidence>
<protein>
    <recommendedName>
        <fullName evidence="1">Exosome complex component Rrp42</fullName>
    </recommendedName>
</protein>
<comment type="function">
    <text evidence="1">Non-catalytic component of the exosome, which is a complex involved in RNA degradation. Contributes to the structuring of the Rrp41 active site.</text>
</comment>
<comment type="subunit">
    <text evidence="1">Component of the archaeal exosome complex. Forms a hexameric ring-like arrangement composed of 3 Rrp41-Rrp42 heterodimers. The hexameric ring associates with a trimer of Rrp4 and/or Csl4 subunits.</text>
</comment>
<comment type="subcellular location">
    <subcellularLocation>
        <location evidence="1">Cytoplasm</location>
    </subcellularLocation>
</comment>
<comment type="similarity">
    <text evidence="1">Belongs to the RNase PH family. Rrp42 subfamily.</text>
</comment>
<sequence length="275" mass="30282">MSSTPSNQNIIPLIKKESIVSLFEKGTRQDGRKLTDYRPLSITLDYAKKADGSALVKLGTTMVLAGTKLEIDKPYEDTPNQGNLIVNVELLPLAYETFEPGPPDENAIELARVVDRSLRDSKALDLTKLVIEPGKSVWTVWLDVYVLDYGGNVLDACTLASVAALYNTKVYKVEQDSNGFRVNKNEVVGKLPLNHPVVTVSIAKVDKYLIVDPDLDEESIMDTKVSFSYTPDLKIVGIQKSGKGSMSLQDIDQAENTARLVAVKLLEELKKQLGI</sequence>
<accession>C3NED0</accession>
<name>RRP42_SACI7</name>
<gene>
    <name evidence="1" type="primary">rrp42</name>
    <name type="ordered locus">YG5714_1402</name>
</gene>
<reference key="1">
    <citation type="journal article" date="2009" name="Proc. Natl. Acad. Sci. U.S.A.">
        <title>Biogeography of the Sulfolobus islandicus pan-genome.</title>
        <authorList>
            <person name="Reno M.L."/>
            <person name="Held N.L."/>
            <person name="Fields C.J."/>
            <person name="Burke P.V."/>
            <person name="Whitaker R.J."/>
        </authorList>
    </citation>
    <scope>NUCLEOTIDE SEQUENCE [LARGE SCALE GENOMIC DNA]</scope>
    <source>
        <strain>Y.G.57.14 / Yellowstone #1</strain>
    </source>
</reference>
<dbReference type="EMBL" id="CP001403">
    <property type="protein sequence ID" value="ACP45669.1"/>
    <property type="molecule type" value="Genomic_DNA"/>
</dbReference>
<dbReference type="RefSeq" id="WP_012713728.1">
    <property type="nucleotide sequence ID" value="NC_012622.1"/>
</dbReference>
<dbReference type="SMR" id="C3NED0"/>
<dbReference type="GeneID" id="84061727"/>
<dbReference type="KEGG" id="siy:YG5714_1402"/>
<dbReference type="HOGENOM" id="CLU_038194_0_0_2"/>
<dbReference type="Proteomes" id="UP000002308">
    <property type="component" value="Chromosome"/>
</dbReference>
<dbReference type="GO" id="GO:0000177">
    <property type="term" value="C:cytoplasmic exosome (RNase complex)"/>
    <property type="evidence" value="ECO:0007669"/>
    <property type="project" value="TreeGrafter"/>
</dbReference>
<dbReference type="GO" id="GO:0035925">
    <property type="term" value="F:mRNA 3'-UTR AU-rich region binding"/>
    <property type="evidence" value="ECO:0007669"/>
    <property type="project" value="TreeGrafter"/>
</dbReference>
<dbReference type="GO" id="GO:0016075">
    <property type="term" value="P:rRNA catabolic process"/>
    <property type="evidence" value="ECO:0007669"/>
    <property type="project" value="TreeGrafter"/>
</dbReference>
<dbReference type="CDD" id="cd11365">
    <property type="entry name" value="RNase_PH_archRRP42"/>
    <property type="match status" value="1"/>
</dbReference>
<dbReference type="FunFam" id="3.30.230.70:FF:000017">
    <property type="entry name" value="Exosome complex component Rrp42"/>
    <property type="match status" value="1"/>
</dbReference>
<dbReference type="Gene3D" id="3.30.230.70">
    <property type="entry name" value="GHMP Kinase, N-terminal domain"/>
    <property type="match status" value="1"/>
</dbReference>
<dbReference type="HAMAP" id="MF_00622">
    <property type="entry name" value="Exosome_Rrp42"/>
    <property type="match status" value="1"/>
</dbReference>
<dbReference type="InterPro" id="IPR001247">
    <property type="entry name" value="ExoRNase_PH_dom1"/>
</dbReference>
<dbReference type="InterPro" id="IPR015847">
    <property type="entry name" value="ExoRNase_PH_dom2"/>
</dbReference>
<dbReference type="InterPro" id="IPR036345">
    <property type="entry name" value="ExoRNase_PH_dom2_sf"/>
</dbReference>
<dbReference type="InterPro" id="IPR050590">
    <property type="entry name" value="Exosome_comp_Rrp42_subfam"/>
</dbReference>
<dbReference type="InterPro" id="IPR027408">
    <property type="entry name" value="PNPase/RNase_PH_dom_sf"/>
</dbReference>
<dbReference type="InterPro" id="IPR020568">
    <property type="entry name" value="Ribosomal_Su5_D2-typ_SF"/>
</dbReference>
<dbReference type="InterPro" id="IPR020869">
    <property type="entry name" value="Rrp42_archaea"/>
</dbReference>
<dbReference type="NCBIfam" id="NF003282">
    <property type="entry name" value="PRK04282.1-1"/>
    <property type="match status" value="1"/>
</dbReference>
<dbReference type="PANTHER" id="PTHR11097:SF8">
    <property type="entry name" value="EXOSOME COMPLEX COMPONENT RRP42"/>
    <property type="match status" value="1"/>
</dbReference>
<dbReference type="PANTHER" id="PTHR11097">
    <property type="entry name" value="EXOSOME COMPLEX EXONUCLEASE RIBOSOMAL RNA PROCESSING PROTEIN"/>
    <property type="match status" value="1"/>
</dbReference>
<dbReference type="Pfam" id="PF01138">
    <property type="entry name" value="RNase_PH"/>
    <property type="match status" value="1"/>
</dbReference>
<dbReference type="Pfam" id="PF03725">
    <property type="entry name" value="RNase_PH_C"/>
    <property type="match status" value="1"/>
</dbReference>
<dbReference type="SUPFAM" id="SSF55666">
    <property type="entry name" value="Ribonuclease PH domain 2-like"/>
    <property type="match status" value="1"/>
</dbReference>
<dbReference type="SUPFAM" id="SSF54211">
    <property type="entry name" value="Ribosomal protein S5 domain 2-like"/>
    <property type="match status" value="1"/>
</dbReference>
<proteinExistence type="inferred from homology"/>